<evidence type="ECO:0000250" key="1">
    <source>
        <dbReference type="UniProtKB" id="Q9UET6"/>
    </source>
</evidence>
<evidence type="ECO:0000255" key="2">
    <source>
        <dbReference type="HAMAP-Rule" id="MF_03162"/>
    </source>
</evidence>
<evidence type="ECO:0000269" key="3">
    <source>
    </source>
</evidence>
<evidence type="ECO:0000269" key="4">
    <source>
    </source>
</evidence>
<evidence type="ECO:0000269" key="5">
    <source>
    </source>
</evidence>
<evidence type="ECO:0000305" key="6"/>
<evidence type="ECO:0000312" key="7">
    <source>
        <dbReference type="EMBL" id="AAH11144.1"/>
    </source>
</evidence>
<evidence type="ECO:0000312" key="8">
    <source>
        <dbReference type="EMBL" id="AAH34880.1"/>
    </source>
</evidence>
<evidence type="ECO:0000312" key="9">
    <source>
        <dbReference type="EMBL" id="BAC29380.1"/>
    </source>
</evidence>
<evidence type="ECO:0000312" key="10">
    <source>
        <dbReference type="MGI" id="MGI:1859648"/>
    </source>
</evidence>
<evidence type="ECO:0000312" key="11">
    <source>
        <dbReference type="Proteomes" id="UP000000589"/>
    </source>
</evidence>
<evidence type="ECO:0007744" key="12">
    <source>
    </source>
</evidence>
<feature type="chain" id="PRO_0000458463" description="tRNA (cytidine(32)/guanosine(34)-2'-O)-methyltransferase">
    <location>
        <begin position="1"/>
        <end position="324"/>
    </location>
</feature>
<feature type="region of interest" description="Required for binding to WDR6" evidence="1">
    <location>
        <begin position="221"/>
        <end position="240"/>
    </location>
</feature>
<feature type="active site" description="Proton acceptor" evidence="2">
    <location>
        <position position="156"/>
    </location>
</feature>
<feature type="binding site" evidence="2">
    <location>
        <position position="53"/>
    </location>
    <ligand>
        <name>S-adenosyl-L-methionine</name>
        <dbReference type="ChEBI" id="CHEBI:59789"/>
    </ligand>
</feature>
<feature type="binding site" evidence="2">
    <location>
        <position position="55"/>
    </location>
    <ligand>
        <name>S-adenosyl-L-methionine</name>
        <dbReference type="ChEBI" id="CHEBI:59789"/>
    </ligand>
</feature>
<feature type="binding site" evidence="2">
    <location>
        <position position="75"/>
    </location>
    <ligand>
        <name>S-adenosyl-L-methionine</name>
        <dbReference type="ChEBI" id="CHEBI:59789"/>
    </ligand>
</feature>
<feature type="binding site" evidence="2">
    <location>
        <position position="91"/>
    </location>
    <ligand>
        <name>S-adenosyl-L-methionine</name>
        <dbReference type="ChEBI" id="CHEBI:59789"/>
    </ligand>
</feature>
<feature type="binding site" evidence="2">
    <location>
        <position position="116"/>
    </location>
    <ligand>
        <name>S-adenosyl-L-methionine</name>
        <dbReference type="ChEBI" id="CHEBI:59789"/>
    </ligand>
</feature>
<feature type="splice variant" id="VSP_061948" description="In isoform 2 and isoform 3.">
    <location>
        <begin position="219"/>
        <end position="220"/>
    </location>
</feature>
<feature type="splice variant" id="VSP_061949" description="In isoform 3.">
    <location>
        <begin position="254"/>
        <end position="267"/>
    </location>
</feature>
<organism evidence="9">
    <name type="scientific">Mus musculus</name>
    <name type="common">Mouse</name>
    <dbReference type="NCBI Taxonomy" id="10090"/>
    <lineage>
        <taxon>Eukaryota</taxon>
        <taxon>Metazoa</taxon>
        <taxon>Chordata</taxon>
        <taxon>Craniata</taxon>
        <taxon>Vertebrata</taxon>
        <taxon>Euteleostomi</taxon>
        <taxon>Mammalia</taxon>
        <taxon>Eutheria</taxon>
        <taxon>Euarchontoglires</taxon>
        <taxon>Glires</taxon>
        <taxon>Rodentia</taxon>
        <taxon>Myomorpha</taxon>
        <taxon>Muroidea</taxon>
        <taxon>Muridae</taxon>
        <taxon>Murinae</taxon>
        <taxon>Mus</taxon>
        <taxon>Mus</taxon>
    </lineage>
</organism>
<proteinExistence type="evidence at protein level"/>
<gene>
    <name evidence="10" type="primary">Ftsj1</name>
</gene>
<sequence>MGRTSKDKRDVYYRLAKENGWRARSAFKLLQLDEEFQLFKGVKRAVDLCAAPGSWSQVLSQKVGGQGSGQVVAVDLQAMAPLPGVIQIQGDITQLSTAKEIIQHFEGCPADLVVCDGAPDVTGLHDVDEYMQAQLLLAALNIATHVLKLGGCFVAKIFRGRDVTLLYSQLRIFFSSVLCAKPKSSRNSSIEAFAVCQGYDPPEGFIPDLTRPLLNHSYDTDFNQLDGPTRVIVPFVACGDLSAYDSDRTYSLDLDGGSEYKYTPPTQPPIAPPYQEACRLKKNGQLAKELLPQECSINSVDKLPQPLAIHTLLDPKVEDNEIHC</sequence>
<accession>Q8CBC7</accession>
<accession>A2ALH2</accession>
<accession>Q8JZY1</accession>
<accession>Q91XA6</accession>
<protein>
    <recommendedName>
        <fullName evidence="6">tRNA (cytidine(32)/guanosine(34)-2'-O)-methyltransferase</fullName>
        <ecNumber evidence="2">2.1.1.205</ecNumber>
    </recommendedName>
    <alternativeName>
        <fullName evidence="2">2'-O-ribose RNA methyltransferase TRM7 homolog</fullName>
    </alternativeName>
    <alternativeName>
        <fullName evidence="2">Protein ftsJ homolog 1</fullName>
    </alternativeName>
</protein>
<name>TRM7_MOUSE</name>
<comment type="function">
    <text evidence="1 3 4 5">Methylates the 2'-O-ribose of nucleotides at positions 32 and 34 of the tRNA anticodon loop of substrate tRNAs (PubMed:33771871). Requisite for faithful cytoplasmic translation (PubMed:33771871). Requires THADA for methylation of the cytidine at position 32 of the anticodon loop of substrate tRNAs (By similarity). Requires WDR6 for methylation of the nucleotide at position 34 of the anticodon loop of substrate tRNAs (By similarity). Promotes translation efficiency of the UUU codon (PubMed:33771871). Plays a role in neurogenesis (PubMed:33771871, PubMed:36101392). Required for expression of genes involved in neurogenesis and mitochondrial translation and energy generation (PubMed:30557699, PubMed:33771871, PubMed:36101392). Requisite for RNA-mediated gene silencing (By similarity). May modify position 32 in tRNA(Arg(ACG)), tRNA(Gln(CUG)), tRNA(Leu(UAA)), tRNA(Leu(UAG)), tRNA(Leu(AAG)), tRNA(Leu(CAG)), tRNA(Phe(GAA)), tRNA(Trp(CCA)) and tRNA(Val(AAC)), and position 34 in tRNA(Phe(GAA)), tRNA(Leu(CAA)), tRNA(Leu(UAA)), tRNA(Sec(UCA)), and tRNA(Trp(CCA)) (PubMed:33771871).</text>
</comment>
<comment type="catalytic activity">
    <reaction evidence="2">
        <text>cytidine(32)/guanosine(34) in tRNA + 2 S-adenosyl-L-methionine = 2'-O-methylcytidine(32)/2'-O-methylguanosine(34) in tRNA + 2 S-adenosyl-L-homocysteine + 2 H(+)</text>
        <dbReference type="Rhea" id="RHEA:42396"/>
        <dbReference type="Rhea" id="RHEA-COMP:10246"/>
        <dbReference type="Rhea" id="RHEA-COMP:10247"/>
        <dbReference type="ChEBI" id="CHEBI:15378"/>
        <dbReference type="ChEBI" id="CHEBI:57856"/>
        <dbReference type="ChEBI" id="CHEBI:59789"/>
        <dbReference type="ChEBI" id="CHEBI:74269"/>
        <dbReference type="ChEBI" id="CHEBI:74445"/>
        <dbReference type="ChEBI" id="CHEBI:74495"/>
        <dbReference type="ChEBI" id="CHEBI:82748"/>
        <dbReference type="EC" id="2.1.1.205"/>
    </reaction>
</comment>
<comment type="subunit">
    <text evidence="1">Interacts with WDR6; the interaction is direct, and required for 2'-O-methylation of position 34 in substrate tRNAs.</text>
</comment>
<comment type="subcellular location">
    <subcellularLocation>
        <location evidence="1">Cytoplasm</location>
    </subcellularLocation>
    <subcellularLocation>
        <location evidence="1">Nucleus</location>
    </subcellularLocation>
    <text evidence="1">Predominantly cytoplasmic.</text>
</comment>
<comment type="alternative products">
    <event type="alternative splicing"/>
    <isoform>
        <id>Q8CBC7-1</id>
        <name>1</name>
        <sequence type="displayed"/>
    </isoform>
    <isoform>
        <id>Q8CBC7-2</id>
        <name>2</name>
        <sequence type="described" ref="VSP_061948"/>
    </isoform>
    <isoform>
        <id>Q8CBC7-3</id>
        <name>3</name>
        <sequence type="described" ref="VSP_061948 VSP_061949"/>
    </isoform>
</comment>
<comment type="disruption phenotype">
    <text evidence="3 4 5">Leads to a reduction in the level of tRNA(Phe(GAA)) in the brain, but not in the liver, kidney or testis (PubMed:33771871). The levels of tRNA(Leu(CAA)) and tRNA(Leu(UAA)) appear normal in the brain, liver, kidney and testis (PubMed:33771871). Impairs long-term potentiation and long-term depression in the hippocampus (PubMed:33771871, PubMed:36101392). Causes immature spine formation in hippocampal and cortical neurons, with an increase in thin dendritic spines and in the striatal neurons, with an increase in the immature filopodia-like spines (PubMed:33771871, PubMed:36101392). Decreases length and width of the postsynaptic density (PSD) of hippocampal and cortical neurons (PubMed:33771871). Leads to a reduction in the apical layer of the hippocampal CA1 area (PubMed:36101392). Slows spatial learning, impairs fear-conditioning and affects anxiety-like behaviors (PubMed:30557699, PubMed:33771871). Reduces blood sugar levels and platelet count, and decreases levels of alpha-amylase, cholesterol, triglycerides and creatinine (PubMed:30557699). Increases blood corticosterone levels (PubMed:30557699). Leads to a slight reduction in body size and weight (PubMed:30557699, PubMed:33771871).</text>
</comment>
<comment type="similarity">
    <text evidence="6">Belongs to the class I-like SAM-binding methyltransferase superfamily. RNA methyltransferase RlmE family. TRM7 subfamily.</text>
</comment>
<comment type="sequence caution" evidence="6">
    <conflict type="miscellaneous discrepancy">
        <sequence resource="EMBL-CDS" id="AAH11144"/>
    </conflict>
    <text>Probable cloning artifact.</text>
</comment>
<reference evidence="9" key="1">
    <citation type="journal article" date="2005" name="Science">
        <title>The transcriptional landscape of the mammalian genome.</title>
        <authorList>
            <person name="Carninci P."/>
            <person name="Kasukawa T."/>
            <person name="Katayama S."/>
            <person name="Gough J."/>
            <person name="Frith M.C."/>
            <person name="Maeda N."/>
            <person name="Oyama R."/>
            <person name="Ravasi T."/>
            <person name="Lenhard B."/>
            <person name="Wells C."/>
            <person name="Kodzius R."/>
            <person name="Shimokawa K."/>
            <person name="Bajic V.B."/>
            <person name="Brenner S.E."/>
            <person name="Batalov S."/>
            <person name="Forrest A.R."/>
            <person name="Zavolan M."/>
            <person name="Davis M.J."/>
            <person name="Wilming L.G."/>
            <person name="Aidinis V."/>
            <person name="Allen J.E."/>
            <person name="Ambesi-Impiombato A."/>
            <person name="Apweiler R."/>
            <person name="Aturaliya R.N."/>
            <person name="Bailey T.L."/>
            <person name="Bansal M."/>
            <person name="Baxter L."/>
            <person name="Beisel K.W."/>
            <person name="Bersano T."/>
            <person name="Bono H."/>
            <person name="Chalk A.M."/>
            <person name="Chiu K.P."/>
            <person name="Choudhary V."/>
            <person name="Christoffels A."/>
            <person name="Clutterbuck D.R."/>
            <person name="Crowe M.L."/>
            <person name="Dalla E."/>
            <person name="Dalrymple B.P."/>
            <person name="de Bono B."/>
            <person name="Della Gatta G."/>
            <person name="di Bernardo D."/>
            <person name="Down T."/>
            <person name="Engstrom P."/>
            <person name="Fagiolini M."/>
            <person name="Faulkner G."/>
            <person name="Fletcher C.F."/>
            <person name="Fukushima T."/>
            <person name="Furuno M."/>
            <person name="Futaki S."/>
            <person name="Gariboldi M."/>
            <person name="Georgii-Hemming P."/>
            <person name="Gingeras T.R."/>
            <person name="Gojobori T."/>
            <person name="Green R.E."/>
            <person name="Gustincich S."/>
            <person name="Harbers M."/>
            <person name="Hayashi Y."/>
            <person name="Hensch T.K."/>
            <person name="Hirokawa N."/>
            <person name="Hill D."/>
            <person name="Huminiecki L."/>
            <person name="Iacono M."/>
            <person name="Ikeo K."/>
            <person name="Iwama A."/>
            <person name="Ishikawa T."/>
            <person name="Jakt M."/>
            <person name="Kanapin A."/>
            <person name="Katoh M."/>
            <person name="Kawasawa Y."/>
            <person name="Kelso J."/>
            <person name="Kitamura H."/>
            <person name="Kitano H."/>
            <person name="Kollias G."/>
            <person name="Krishnan S.P."/>
            <person name="Kruger A."/>
            <person name="Kummerfeld S.K."/>
            <person name="Kurochkin I.V."/>
            <person name="Lareau L.F."/>
            <person name="Lazarevic D."/>
            <person name="Lipovich L."/>
            <person name="Liu J."/>
            <person name="Liuni S."/>
            <person name="McWilliam S."/>
            <person name="Madan Babu M."/>
            <person name="Madera M."/>
            <person name="Marchionni L."/>
            <person name="Matsuda H."/>
            <person name="Matsuzawa S."/>
            <person name="Miki H."/>
            <person name="Mignone F."/>
            <person name="Miyake S."/>
            <person name="Morris K."/>
            <person name="Mottagui-Tabar S."/>
            <person name="Mulder N."/>
            <person name="Nakano N."/>
            <person name="Nakauchi H."/>
            <person name="Ng P."/>
            <person name="Nilsson R."/>
            <person name="Nishiguchi S."/>
            <person name="Nishikawa S."/>
            <person name="Nori F."/>
            <person name="Ohara O."/>
            <person name="Okazaki Y."/>
            <person name="Orlando V."/>
            <person name="Pang K.C."/>
            <person name="Pavan W.J."/>
            <person name="Pavesi G."/>
            <person name="Pesole G."/>
            <person name="Petrovsky N."/>
            <person name="Piazza S."/>
            <person name="Reed J."/>
            <person name="Reid J.F."/>
            <person name="Ring B.Z."/>
            <person name="Ringwald M."/>
            <person name="Rost B."/>
            <person name="Ruan Y."/>
            <person name="Salzberg S.L."/>
            <person name="Sandelin A."/>
            <person name="Schneider C."/>
            <person name="Schoenbach C."/>
            <person name="Sekiguchi K."/>
            <person name="Semple C.A."/>
            <person name="Seno S."/>
            <person name="Sessa L."/>
            <person name="Sheng Y."/>
            <person name="Shibata Y."/>
            <person name="Shimada H."/>
            <person name="Shimada K."/>
            <person name="Silva D."/>
            <person name="Sinclair B."/>
            <person name="Sperling S."/>
            <person name="Stupka E."/>
            <person name="Sugiura K."/>
            <person name="Sultana R."/>
            <person name="Takenaka Y."/>
            <person name="Taki K."/>
            <person name="Tammoja K."/>
            <person name="Tan S.L."/>
            <person name="Tang S."/>
            <person name="Taylor M.S."/>
            <person name="Tegner J."/>
            <person name="Teichmann S.A."/>
            <person name="Ueda H.R."/>
            <person name="van Nimwegen E."/>
            <person name="Verardo R."/>
            <person name="Wei C.L."/>
            <person name="Yagi K."/>
            <person name="Yamanishi H."/>
            <person name="Zabarovsky E."/>
            <person name="Zhu S."/>
            <person name="Zimmer A."/>
            <person name="Hide W."/>
            <person name="Bult C."/>
            <person name="Grimmond S.M."/>
            <person name="Teasdale R.D."/>
            <person name="Liu E.T."/>
            <person name="Brusic V."/>
            <person name="Quackenbush J."/>
            <person name="Wahlestedt C."/>
            <person name="Mattick J.S."/>
            <person name="Hume D.A."/>
            <person name="Kai C."/>
            <person name="Sasaki D."/>
            <person name="Tomaru Y."/>
            <person name="Fukuda S."/>
            <person name="Kanamori-Katayama M."/>
            <person name="Suzuki M."/>
            <person name="Aoki J."/>
            <person name="Arakawa T."/>
            <person name="Iida J."/>
            <person name="Imamura K."/>
            <person name="Itoh M."/>
            <person name="Kato T."/>
            <person name="Kawaji H."/>
            <person name="Kawagashira N."/>
            <person name="Kawashima T."/>
            <person name="Kojima M."/>
            <person name="Kondo S."/>
            <person name="Konno H."/>
            <person name="Nakano K."/>
            <person name="Ninomiya N."/>
            <person name="Nishio T."/>
            <person name="Okada M."/>
            <person name="Plessy C."/>
            <person name="Shibata K."/>
            <person name="Shiraki T."/>
            <person name="Suzuki S."/>
            <person name="Tagami M."/>
            <person name="Waki K."/>
            <person name="Watahiki A."/>
            <person name="Okamura-Oho Y."/>
            <person name="Suzuki H."/>
            <person name="Kawai J."/>
            <person name="Hayashizaki Y."/>
        </authorList>
    </citation>
    <scope>NUCLEOTIDE SEQUENCE [LARGE SCALE MRNA] (ISOFORM 1)</scope>
</reference>
<reference evidence="7 8" key="2">
    <citation type="journal article" date="2004" name="Genome Res.">
        <title>The status, quality, and expansion of the NIH full-length cDNA project: the Mammalian Gene Collection (MGC).</title>
        <authorList>
            <consortium name="The MGC Project Team"/>
        </authorList>
    </citation>
    <scope>NUCLEOTIDE SEQUENCE [LARGE SCALE MRNA] (ISOFORMS 2 AND 3)</scope>
    <source>
        <strain evidence="7">FVB/N</strain>
        <tissue evidence="7">Liver</tissue>
        <tissue evidence="8">Mammary gland</tissue>
    </source>
</reference>
<reference evidence="11" key="3">
    <citation type="journal article" date="2009" name="PLoS Biol.">
        <title>Lineage-specific biology revealed by a finished genome assembly of the mouse.</title>
        <authorList>
            <person name="Church D.M."/>
            <person name="Goodstadt L."/>
            <person name="Hillier L.W."/>
            <person name="Zody M.C."/>
            <person name="Goldstein S."/>
            <person name="She X."/>
            <person name="Bult C.J."/>
            <person name="Agarwala R."/>
            <person name="Cherry J.L."/>
            <person name="DiCuccio M."/>
            <person name="Hlavina W."/>
            <person name="Kapustin Y."/>
            <person name="Meric P."/>
            <person name="Maglott D."/>
            <person name="Birtle Z."/>
            <person name="Marques A.C."/>
            <person name="Graves T."/>
            <person name="Zhou S."/>
            <person name="Teague B."/>
            <person name="Potamousis K."/>
            <person name="Churas C."/>
            <person name="Place M."/>
            <person name="Herschleb J."/>
            <person name="Runnheim R."/>
            <person name="Forrest D."/>
            <person name="Amos-Landgraf J."/>
            <person name="Schwartz D.C."/>
            <person name="Cheng Z."/>
            <person name="Lindblad-Toh K."/>
            <person name="Eichler E.E."/>
            <person name="Ponting C.P."/>
        </authorList>
    </citation>
    <scope>NUCLEOTIDE SEQUENCE [LARGE SCALE GENOMIC DNA]</scope>
    <source>
        <strain evidence="11">C57BL/6J</strain>
    </source>
</reference>
<reference evidence="12" key="4">
    <citation type="journal article" date="2010" name="Cell">
        <title>A tissue-specific atlas of mouse protein phosphorylation and expression.</title>
        <authorList>
            <person name="Huttlin E.L."/>
            <person name="Jedrychowski M.P."/>
            <person name="Elias J.E."/>
            <person name="Goswami T."/>
            <person name="Rad R."/>
            <person name="Beausoleil S.A."/>
            <person name="Villen J."/>
            <person name="Haas W."/>
            <person name="Sowa M.E."/>
            <person name="Gygi S.P."/>
        </authorList>
    </citation>
    <scope>IDENTIFICATION BY MASS SPECTROMETRY [LARGE SCALE ANALYSIS]</scope>
</reference>
<reference evidence="6" key="5">
    <citation type="journal article" date="2019" name="Biochim. Biophys. Acta">
        <title>A mouse model for intellectual disability caused by mutations in the X-linked 2'-O-methyltransferase Ftsj1 gene.</title>
        <authorList>
            <person name="Jensen L.R."/>
            <person name="Garrett L."/>
            <person name="Hoelter S.M."/>
            <person name="Rathkolb B."/>
            <person name="Racz I."/>
            <person name="Adler T."/>
            <person name="Prehn C."/>
            <person name="Hans W."/>
            <person name="Rozman J."/>
            <person name="Becker L."/>
            <person name="Aguilar-Pimentel J.A."/>
            <person name="Puk O."/>
            <person name="Moreth K."/>
            <person name="Dopatka M."/>
            <person name="Walther D.J."/>
            <person name="von Bohlen Und Halbach V."/>
            <person name="Rath M."/>
            <person name="Delatycki M."/>
            <person name="Bert B."/>
            <person name="Fink H."/>
            <person name="Bluemlein K."/>
            <person name="Ralser M."/>
            <person name="Van Dijck A."/>
            <person name="Kooy F."/>
            <person name="Stark Z."/>
            <person name="Mueller S."/>
            <person name="Scherthan H."/>
            <person name="Gecz J."/>
            <person name="Wurst W."/>
            <person name="Wolf E."/>
            <person name="Zimmer A."/>
            <person name="Klingenspor M."/>
            <person name="Graw J."/>
            <person name="Klopstock T."/>
            <person name="Busch D."/>
            <person name="Adamski J."/>
            <person name="Fuchs H."/>
            <person name="Gailus-Durner V."/>
            <person name="de Angelis M.H."/>
            <person name="von Bohlen Und Halbach O."/>
            <person name="Ropers H.H."/>
            <person name="Kuss A.W."/>
        </authorList>
    </citation>
    <scope>FUNCTION</scope>
    <scope>DISRUPTION PHENOTYPE</scope>
</reference>
<reference evidence="6" key="6">
    <citation type="journal article" date="2021" name="Sci. Adv.">
        <title>Loss of Ftsj1 perturbs codon-specific translation efficiency in the brain and is associated with X-linked intellectual disability.</title>
        <authorList>
            <person name="Nagayoshi Y."/>
            <person name="Chujo T."/>
            <person name="Hirata S."/>
            <person name="Nakatsuka H."/>
            <person name="Chen C.W."/>
            <person name="Takakura M."/>
            <person name="Miyauchi K."/>
            <person name="Ikeuchi Y."/>
            <person name="Carlyle B.C."/>
            <person name="Kitchen R.R."/>
            <person name="Suzuki T."/>
            <person name="Katsuoka F."/>
            <person name="Yamamoto M."/>
            <person name="Goto Y."/>
            <person name="Tanaka M."/>
            <person name="Natsume K."/>
            <person name="Nairn A.C."/>
            <person name="Suzuki T."/>
            <person name="Tomizawa K."/>
            <person name="Wei F.Y."/>
        </authorList>
    </citation>
    <scope>FUNCTION</scope>
    <scope>DISRUPTION PHENOTYPE</scope>
</reference>
<reference evidence="6" key="7">
    <citation type="journal article" date="2022" name="Biology">
        <title>Deficiency in FTSJ1 Affects Neuronal Plasticity in the Hippocampal Formation of Mice.</title>
        <authorList>
            <person name="von Bohlen Und Halbach V."/>
            <person name="Venz S."/>
            <person name="Nwakor S."/>
            <person name="Hentschker C."/>
            <person name="Hammer E."/>
            <person name="Junker H."/>
            <person name="Kuss A.W."/>
            <person name="von Bohlen Und Halbach O."/>
            <person name="Jensen L.R."/>
        </authorList>
    </citation>
    <scope>FUNCTION</scope>
    <scope>DISRUPTION PHENOTYPE</scope>
</reference>
<keyword id="KW-0025">Alternative splicing</keyword>
<keyword id="KW-0963">Cytoplasm</keyword>
<keyword id="KW-0489">Methyltransferase</keyword>
<keyword id="KW-0539">Nucleus</keyword>
<keyword id="KW-1185">Reference proteome</keyword>
<keyword id="KW-0949">S-adenosyl-L-methionine</keyword>
<keyword id="KW-0808">Transferase</keyword>
<keyword id="KW-0819">tRNA processing</keyword>
<dbReference type="EC" id="2.1.1.205" evidence="2"/>
<dbReference type="EMBL" id="AK036313">
    <property type="protein sequence ID" value="BAC29380.1"/>
    <property type="molecule type" value="mRNA"/>
</dbReference>
<dbReference type="EMBL" id="BC011144">
    <property type="protein sequence ID" value="AAH11144.1"/>
    <property type="status" value="ALT_SEQ"/>
    <property type="molecule type" value="mRNA"/>
</dbReference>
<dbReference type="EMBL" id="BC034880">
    <property type="protein sequence ID" value="AAH34880.1"/>
    <property type="molecule type" value="mRNA"/>
</dbReference>
<dbReference type="CCDS" id="CCDS29994.1">
    <molecule id="Q8CBC7-1"/>
</dbReference>
<dbReference type="CCDS" id="CCDS72340.1">
    <molecule id="Q8CBC7-2"/>
</dbReference>
<dbReference type="RefSeq" id="NP_001277359.1">
    <molecule id="Q8CBC7-2"/>
    <property type="nucleotide sequence ID" value="NM_001290430.2"/>
</dbReference>
<dbReference type="RefSeq" id="NP_598752.2">
    <molecule id="Q8CBC7-1"/>
    <property type="nucleotide sequence ID" value="NM_133991.2"/>
</dbReference>
<dbReference type="SMR" id="Q8CBC7"/>
<dbReference type="FunCoup" id="Q8CBC7">
    <property type="interactions" value="3293"/>
</dbReference>
<dbReference type="STRING" id="10090.ENSMUSP00000033513"/>
<dbReference type="iPTMnet" id="Q8CBC7"/>
<dbReference type="PhosphoSitePlus" id="Q8CBC7"/>
<dbReference type="PaxDb" id="10090-ENSMUSP00000033513"/>
<dbReference type="PeptideAtlas" id="Q8CBC7"/>
<dbReference type="ProteomicsDB" id="343227"/>
<dbReference type="ProteomicsDB" id="344711"/>
<dbReference type="ProteomicsDB" id="353683"/>
<dbReference type="Antibodypedia" id="445">
    <property type="antibodies" value="141 antibodies from 20 providers"/>
</dbReference>
<dbReference type="DNASU" id="54632"/>
<dbReference type="Ensembl" id="ENSMUST00000033513.10">
    <molecule id="Q8CBC7-1"/>
    <property type="protein sequence ID" value="ENSMUSP00000033513.4"/>
    <property type="gene ID" value="ENSMUSG00000031171.12"/>
</dbReference>
<dbReference type="Ensembl" id="ENSMUST00000115594.8">
    <molecule id="Q8CBC7-3"/>
    <property type="protein sequence ID" value="ENSMUSP00000111257.2"/>
    <property type="gene ID" value="ENSMUSG00000031171.12"/>
</dbReference>
<dbReference type="Ensembl" id="ENSMUST00000115595.8">
    <molecule id="Q8CBC7-2"/>
    <property type="protein sequence ID" value="ENSMUSP00000111258.2"/>
    <property type="gene ID" value="ENSMUSG00000031171.12"/>
</dbReference>
<dbReference type="GeneID" id="54632"/>
<dbReference type="KEGG" id="mmu:54632"/>
<dbReference type="UCSC" id="uc009sop.1">
    <molecule id="Q8CBC7-1"/>
    <property type="organism name" value="mouse"/>
</dbReference>
<dbReference type="AGR" id="MGI:1859648"/>
<dbReference type="CTD" id="24140"/>
<dbReference type="MGI" id="MGI:1859648">
    <property type="gene designation" value="Ftsj1"/>
</dbReference>
<dbReference type="VEuPathDB" id="HostDB:ENSMUSG00000031171"/>
<dbReference type="eggNOG" id="KOG1099">
    <property type="taxonomic scope" value="Eukaryota"/>
</dbReference>
<dbReference type="GeneTree" id="ENSGT00730000111146"/>
<dbReference type="HOGENOM" id="CLU_009422_1_2_1"/>
<dbReference type="OMA" id="FIVCLNF"/>
<dbReference type="OrthoDB" id="289250at2759"/>
<dbReference type="TreeFam" id="TF314897"/>
<dbReference type="BioGRID-ORCS" id="54632">
    <property type="hits" value="2 hits in 81 CRISPR screens"/>
</dbReference>
<dbReference type="ChiTaRS" id="Ftsj1">
    <property type="organism name" value="mouse"/>
</dbReference>
<dbReference type="PRO" id="PR:Q8CBC7"/>
<dbReference type="Proteomes" id="UP000000589">
    <property type="component" value="Chromosome X"/>
</dbReference>
<dbReference type="RNAct" id="Q8CBC7">
    <property type="molecule type" value="protein"/>
</dbReference>
<dbReference type="Bgee" id="ENSMUSG00000031171">
    <property type="expression patterns" value="Expressed in undifferentiated genital tubercle and 256 other cell types or tissues"/>
</dbReference>
<dbReference type="ExpressionAtlas" id="Q8CBC7">
    <property type="expression patterns" value="baseline and differential"/>
</dbReference>
<dbReference type="GO" id="GO:0005829">
    <property type="term" value="C:cytosol"/>
    <property type="evidence" value="ECO:0000250"/>
    <property type="project" value="UniProtKB"/>
</dbReference>
<dbReference type="GO" id="GO:0005634">
    <property type="term" value="C:nucleus"/>
    <property type="evidence" value="ECO:0000250"/>
    <property type="project" value="UniProtKB"/>
</dbReference>
<dbReference type="GO" id="GO:1904047">
    <property type="term" value="F:S-adenosyl-L-methionine binding"/>
    <property type="evidence" value="ECO:0000250"/>
    <property type="project" value="UniProtKB"/>
</dbReference>
<dbReference type="GO" id="GO:0106340">
    <property type="term" value="F:tRNA (cytidine(32)/guanosine(34)-2'-O)-methyltransferase activity"/>
    <property type="evidence" value="ECO:0000250"/>
    <property type="project" value="UniProtKB"/>
</dbReference>
<dbReference type="GO" id="GO:0016423">
    <property type="term" value="F:tRNA (guanine) methyltransferase activity"/>
    <property type="evidence" value="ECO:0000250"/>
    <property type="project" value="UniProtKB"/>
</dbReference>
<dbReference type="GO" id="GO:0002181">
    <property type="term" value="P:cytoplasmic translation"/>
    <property type="evidence" value="ECO:0000250"/>
    <property type="project" value="UniProtKB"/>
</dbReference>
<dbReference type="GO" id="GO:0022008">
    <property type="term" value="P:neurogenesis"/>
    <property type="evidence" value="ECO:0007669"/>
    <property type="project" value="Ensembl"/>
</dbReference>
<dbReference type="GO" id="GO:0002130">
    <property type="term" value="P:wobble position ribose methylation"/>
    <property type="evidence" value="ECO:0000250"/>
    <property type="project" value="UniProtKB"/>
</dbReference>
<dbReference type="FunFam" id="3.40.50.150:FF:000040">
    <property type="entry name" value="Putative ribosomal RNA methyltransferase 1"/>
    <property type="match status" value="1"/>
</dbReference>
<dbReference type="Gene3D" id="3.40.50.150">
    <property type="entry name" value="Vaccinia Virus protein VP39"/>
    <property type="match status" value="1"/>
</dbReference>
<dbReference type="HAMAP" id="MF_01547">
    <property type="entry name" value="RNA_methyltr_E"/>
    <property type="match status" value="1"/>
</dbReference>
<dbReference type="HAMAP" id="MF_03162">
    <property type="entry name" value="RNA_methyltr_E_TRM7"/>
    <property type="match status" value="1"/>
</dbReference>
<dbReference type="InterPro" id="IPR028590">
    <property type="entry name" value="RNA_methyltr_E_TRM7"/>
</dbReference>
<dbReference type="InterPro" id="IPR050082">
    <property type="entry name" value="RNA_methyltr_RlmE"/>
</dbReference>
<dbReference type="InterPro" id="IPR002877">
    <property type="entry name" value="RNA_MeTrfase_FtsJ_dom"/>
</dbReference>
<dbReference type="InterPro" id="IPR015507">
    <property type="entry name" value="rRNA-MeTfrase_E"/>
</dbReference>
<dbReference type="InterPro" id="IPR029063">
    <property type="entry name" value="SAM-dependent_MTases_sf"/>
</dbReference>
<dbReference type="PANTHER" id="PTHR10920">
    <property type="entry name" value="RIBOSOMAL RNA METHYLTRANSFERASE"/>
    <property type="match status" value="1"/>
</dbReference>
<dbReference type="PANTHER" id="PTHR10920:SF12">
    <property type="entry name" value="TRNA (CYTIDINE(32)_GUANOSINE(34)-2'-O)-METHYLTRANSFERASE-RELATED"/>
    <property type="match status" value="1"/>
</dbReference>
<dbReference type="Pfam" id="PF01728">
    <property type="entry name" value="FtsJ"/>
    <property type="match status" value="1"/>
</dbReference>
<dbReference type="SUPFAM" id="SSF53335">
    <property type="entry name" value="S-adenosyl-L-methionine-dependent methyltransferases"/>
    <property type="match status" value="1"/>
</dbReference>